<sequence>VGKFPLLANSR</sequence>
<evidence type="ECO:0000250" key="1"/>
<evidence type="ECO:0000250" key="2">
    <source>
        <dbReference type="UniProtKB" id="P09622"/>
    </source>
</evidence>
<evidence type="ECO:0000250" key="3">
    <source>
        <dbReference type="UniProtKB" id="P14218"/>
    </source>
</evidence>
<evidence type="ECO:0000255" key="4"/>
<evidence type="ECO:0000305" key="5"/>
<reference key="1">
    <citation type="journal article" date="2006" name="Ann. Bot.">
        <title>Proteome profiling of Populus euphratica Oliv. upon heat stress.</title>
        <authorList>
            <person name="Ferreira S."/>
            <person name="Hjernoe K."/>
            <person name="Larsen M."/>
            <person name="Wingsle G."/>
            <person name="Larsen P."/>
            <person name="Fey S."/>
            <person name="Roepstorff P."/>
            <person name="Pais M.S."/>
        </authorList>
    </citation>
    <scope>PROTEIN SEQUENCE</scope>
    <source>
        <tissue>Leaf</tissue>
    </source>
</reference>
<feature type="chain" id="PRO_0000068011" description="Dihydrolipoyl dehydrogenase">
    <location>
        <begin position="1" status="less than"/>
        <end position="11" status="greater than"/>
    </location>
</feature>
<feature type="non-terminal residue">
    <location>
        <position position="1"/>
    </location>
</feature>
<feature type="non-terminal residue">
    <location>
        <position position="11"/>
    </location>
</feature>
<proteinExistence type="evidence at protein level"/>
<keyword id="KW-0903">Direct protein sequencing</keyword>
<keyword id="KW-0274">FAD</keyword>
<keyword id="KW-0285">Flavoprotein</keyword>
<keyword id="KW-0520">NAD</keyword>
<keyword id="KW-0560">Oxidoreductase</keyword>
<keyword id="KW-0676">Redox-active center</keyword>
<keyword id="KW-1185">Reference proteome</keyword>
<accession>P84545</accession>
<dbReference type="EC" id="1.8.1.4"/>
<dbReference type="Proteomes" id="UP000694918">
    <property type="component" value="Unplaced"/>
</dbReference>
<dbReference type="GO" id="GO:0004148">
    <property type="term" value="F:dihydrolipoyl dehydrogenase (NADH) activity"/>
    <property type="evidence" value="ECO:0007669"/>
    <property type="project" value="UniProtKB-EC"/>
</dbReference>
<comment type="function">
    <text evidence="1">Lipoamide dehydrogenase is a component of the glycine cleavage system as well as of the alpha-ketoacid dehydrogenase complexes. The pyruvate dehydrogenase complex contains multiple copies of three enzymatic components: pyruvate dehydrogenase (E1), dihydrolipoamide acetyltransferase (E2) and lipoamide dehydrogenase (E3) (By similarity).</text>
</comment>
<comment type="catalytic activity">
    <reaction evidence="2">
        <text>N(6)-[(R)-dihydrolipoyl]-L-lysyl-[protein] + NAD(+) = N(6)-[(R)-lipoyl]-L-lysyl-[protein] + NADH + H(+)</text>
        <dbReference type="Rhea" id="RHEA:15045"/>
        <dbReference type="Rhea" id="RHEA-COMP:10474"/>
        <dbReference type="Rhea" id="RHEA-COMP:10475"/>
        <dbReference type="ChEBI" id="CHEBI:15378"/>
        <dbReference type="ChEBI" id="CHEBI:57540"/>
        <dbReference type="ChEBI" id="CHEBI:57945"/>
        <dbReference type="ChEBI" id="CHEBI:83099"/>
        <dbReference type="ChEBI" id="CHEBI:83100"/>
        <dbReference type="EC" id="1.8.1.4"/>
    </reaction>
</comment>
<comment type="cofactor">
    <cofactor evidence="3">
        <name>FAD</name>
        <dbReference type="ChEBI" id="CHEBI:57692"/>
    </cofactor>
    <text evidence="3">Binds 1 FAD per subunit.</text>
</comment>
<comment type="subunit">
    <text evidence="2">Homodimer.</text>
</comment>
<comment type="miscellaneous">
    <text evidence="5">The active site is a redox-active disulfide bond.</text>
</comment>
<comment type="similarity">
    <text evidence="4">Belongs to the class-I pyridine nucleotide-disulfide oxidoreductase family.</text>
</comment>
<organism>
    <name type="scientific">Populus euphratica</name>
    <name type="common">Euphrates poplar</name>
    <dbReference type="NCBI Taxonomy" id="75702"/>
    <lineage>
        <taxon>Eukaryota</taxon>
        <taxon>Viridiplantae</taxon>
        <taxon>Streptophyta</taxon>
        <taxon>Embryophyta</taxon>
        <taxon>Tracheophyta</taxon>
        <taxon>Spermatophyta</taxon>
        <taxon>Magnoliopsida</taxon>
        <taxon>eudicotyledons</taxon>
        <taxon>Gunneridae</taxon>
        <taxon>Pentapetalae</taxon>
        <taxon>rosids</taxon>
        <taxon>fabids</taxon>
        <taxon>Malpighiales</taxon>
        <taxon>Salicaceae</taxon>
        <taxon>Saliceae</taxon>
        <taxon>Populus</taxon>
    </lineage>
</organism>
<name>DLDH_POPEU</name>
<protein>
    <recommendedName>
        <fullName>Dihydrolipoyl dehydrogenase</fullName>
        <ecNumber>1.8.1.4</ecNumber>
    </recommendedName>
    <alternativeName>
        <fullName>Dihydrolipoamide dehydrogenase</fullName>
    </alternativeName>
</protein>